<evidence type="ECO:0000255" key="1">
    <source>
        <dbReference type="HAMAP-Rule" id="MF_00252"/>
    </source>
</evidence>
<dbReference type="EC" id="6.1.1.6" evidence="1"/>
<dbReference type="EMBL" id="CP000111">
    <property type="protein sequence ID" value="ABB50772.1"/>
    <property type="molecule type" value="Genomic_DNA"/>
</dbReference>
<dbReference type="RefSeq" id="WP_011377253.1">
    <property type="nucleotide sequence ID" value="NC_007577.1"/>
</dbReference>
<dbReference type="SMR" id="Q318C3"/>
<dbReference type="STRING" id="74546.PMT9312_1711"/>
<dbReference type="KEGG" id="pmi:PMT9312_1711"/>
<dbReference type="eggNOG" id="COG1190">
    <property type="taxonomic scope" value="Bacteria"/>
</dbReference>
<dbReference type="HOGENOM" id="CLU_008255_6_0_3"/>
<dbReference type="OrthoDB" id="9802326at2"/>
<dbReference type="Proteomes" id="UP000002715">
    <property type="component" value="Chromosome"/>
</dbReference>
<dbReference type="GO" id="GO:0005829">
    <property type="term" value="C:cytosol"/>
    <property type="evidence" value="ECO:0007669"/>
    <property type="project" value="TreeGrafter"/>
</dbReference>
<dbReference type="GO" id="GO:0005524">
    <property type="term" value="F:ATP binding"/>
    <property type="evidence" value="ECO:0007669"/>
    <property type="project" value="UniProtKB-UniRule"/>
</dbReference>
<dbReference type="GO" id="GO:0004824">
    <property type="term" value="F:lysine-tRNA ligase activity"/>
    <property type="evidence" value="ECO:0007669"/>
    <property type="project" value="UniProtKB-UniRule"/>
</dbReference>
<dbReference type="GO" id="GO:0000287">
    <property type="term" value="F:magnesium ion binding"/>
    <property type="evidence" value="ECO:0007669"/>
    <property type="project" value="UniProtKB-UniRule"/>
</dbReference>
<dbReference type="GO" id="GO:0000049">
    <property type="term" value="F:tRNA binding"/>
    <property type="evidence" value="ECO:0007669"/>
    <property type="project" value="TreeGrafter"/>
</dbReference>
<dbReference type="GO" id="GO:0006430">
    <property type="term" value="P:lysyl-tRNA aminoacylation"/>
    <property type="evidence" value="ECO:0007669"/>
    <property type="project" value="UniProtKB-UniRule"/>
</dbReference>
<dbReference type="CDD" id="cd00775">
    <property type="entry name" value="LysRS_core"/>
    <property type="match status" value="1"/>
</dbReference>
<dbReference type="CDD" id="cd04322">
    <property type="entry name" value="LysRS_N"/>
    <property type="match status" value="1"/>
</dbReference>
<dbReference type="FunFam" id="2.40.50.140:FF:000024">
    <property type="entry name" value="Lysine--tRNA ligase"/>
    <property type="match status" value="1"/>
</dbReference>
<dbReference type="Gene3D" id="3.30.930.10">
    <property type="entry name" value="Bira Bifunctional Protein, Domain 2"/>
    <property type="match status" value="1"/>
</dbReference>
<dbReference type="Gene3D" id="2.40.50.140">
    <property type="entry name" value="Nucleic acid-binding proteins"/>
    <property type="match status" value="1"/>
</dbReference>
<dbReference type="HAMAP" id="MF_00252">
    <property type="entry name" value="Lys_tRNA_synth_class2"/>
    <property type="match status" value="1"/>
</dbReference>
<dbReference type="InterPro" id="IPR004364">
    <property type="entry name" value="Aa-tRNA-synt_II"/>
</dbReference>
<dbReference type="InterPro" id="IPR006195">
    <property type="entry name" value="aa-tRNA-synth_II"/>
</dbReference>
<dbReference type="InterPro" id="IPR045864">
    <property type="entry name" value="aa-tRNA-synth_II/BPL/LPL"/>
</dbReference>
<dbReference type="InterPro" id="IPR002313">
    <property type="entry name" value="Lys-tRNA-ligase_II"/>
</dbReference>
<dbReference type="InterPro" id="IPR034762">
    <property type="entry name" value="Lys-tRNA-ligase_II_bac/euk"/>
</dbReference>
<dbReference type="InterPro" id="IPR044136">
    <property type="entry name" value="Lys-tRNA-ligase_II_N"/>
</dbReference>
<dbReference type="InterPro" id="IPR018149">
    <property type="entry name" value="Lys-tRNA-synth_II_C"/>
</dbReference>
<dbReference type="InterPro" id="IPR012340">
    <property type="entry name" value="NA-bd_OB-fold"/>
</dbReference>
<dbReference type="InterPro" id="IPR004365">
    <property type="entry name" value="NA-bd_OB_tRNA"/>
</dbReference>
<dbReference type="NCBIfam" id="TIGR00499">
    <property type="entry name" value="lysS_bact"/>
    <property type="match status" value="1"/>
</dbReference>
<dbReference type="NCBIfam" id="NF001756">
    <property type="entry name" value="PRK00484.1"/>
    <property type="match status" value="1"/>
</dbReference>
<dbReference type="PANTHER" id="PTHR42918:SF15">
    <property type="entry name" value="LYSINE--TRNA LIGASE, CHLOROPLASTIC_MITOCHONDRIAL"/>
    <property type="match status" value="1"/>
</dbReference>
<dbReference type="PANTHER" id="PTHR42918">
    <property type="entry name" value="LYSYL-TRNA SYNTHETASE"/>
    <property type="match status" value="1"/>
</dbReference>
<dbReference type="Pfam" id="PF00152">
    <property type="entry name" value="tRNA-synt_2"/>
    <property type="match status" value="1"/>
</dbReference>
<dbReference type="Pfam" id="PF01336">
    <property type="entry name" value="tRNA_anti-codon"/>
    <property type="match status" value="1"/>
</dbReference>
<dbReference type="PIRSF" id="PIRSF039101">
    <property type="entry name" value="LysRS2"/>
    <property type="match status" value="1"/>
</dbReference>
<dbReference type="PRINTS" id="PR00982">
    <property type="entry name" value="TRNASYNTHLYS"/>
</dbReference>
<dbReference type="SUPFAM" id="SSF55681">
    <property type="entry name" value="Class II aaRS and biotin synthetases"/>
    <property type="match status" value="1"/>
</dbReference>
<dbReference type="SUPFAM" id="SSF50249">
    <property type="entry name" value="Nucleic acid-binding proteins"/>
    <property type="match status" value="1"/>
</dbReference>
<dbReference type="PROSITE" id="PS50862">
    <property type="entry name" value="AA_TRNA_LIGASE_II"/>
    <property type="match status" value="1"/>
</dbReference>
<comment type="catalytic activity">
    <reaction evidence="1">
        <text>tRNA(Lys) + L-lysine + ATP = L-lysyl-tRNA(Lys) + AMP + diphosphate</text>
        <dbReference type="Rhea" id="RHEA:20792"/>
        <dbReference type="Rhea" id="RHEA-COMP:9696"/>
        <dbReference type="Rhea" id="RHEA-COMP:9697"/>
        <dbReference type="ChEBI" id="CHEBI:30616"/>
        <dbReference type="ChEBI" id="CHEBI:32551"/>
        <dbReference type="ChEBI" id="CHEBI:33019"/>
        <dbReference type="ChEBI" id="CHEBI:78442"/>
        <dbReference type="ChEBI" id="CHEBI:78529"/>
        <dbReference type="ChEBI" id="CHEBI:456215"/>
        <dbReference type="EC" id="6.1.1.6"/>
    </reaction>
</comment>
<comment type="cofactor">
    <cofactor evidence="1">
        <name>Mg(2+)</name>
        <dbReference type="ChEBI" id="CHEBI:18420"/>
    </cofactor>
    <text evidence="1">Binds 3 Mg(2+) ions per subunit.</text>
</comment>
<comment type="subunit">
    <text evidence="1">Homodimer.</text>
</comment>
<comment type="subcellular location">
    <subcellularLocation>
        <location evidence="1">Cytoplasm</location>
    </subcellularLocation>
</comment>
<comment type="similarity">
    <text evidence="1">Belongs to the class-II aminoacyl-tRNA synthetase family.</text>
</comment>
<keyword id="KW-0030">Aminoacyl-tRNA synthetase</keyword>
<keyword id="KW-0067">ATP-binding</keyword>
<keyword id="KW-0963">Cytoplasm</keyword>
<keyword id="KW-0436">Ligase</keyword>
<keyword id="KW-0460">Magnesium</keyword>
<keyword id="KW-0479">Metal-binding</keyword>
<keyword id="KW-0547">Nucleotide-binding</keyword>
<keyword id="KW-0648">Protein biosynthesis</keyword>
<organism>
    <name type="scientific">Prochlorococcus marinus (strain MIT 9312)</name>
    <dbReference type="NCBI Taxonomy" id="74546"/>
    <lineage>
        <taxon>Bacteria</taxon>
        <taxon>Bacillati</taxon>
        <taxon>Cyanobacteriota</taxon>
        <taxon>Cyanophyceae</taxon>
        <taxon>Synechococcales</taxon>
        <taxon>Prochlorococcaceae</taxon>
        <taxon>Prochlorococcus</taxon>
    </lineage>
</organism>
<proteinExistence type="inferred from homology"/>
<sequence>MSEIREARLQKANSLVSKGFASYAESFSVSHTTKFLIQKFDYLENGQEEDFSVSLAGRVMAKRVMGKIAFFTISDQEGQIQLYLDKRMINCNLENQKLLSFEDIKEIVDIGDWIGVYGTIKKTNKGELSIKVEKWEMLSKSLQPLPDKWHGLTDIEKRYRQRYLDLIVNPHSKNVFKTRAKCISFIRQWLDNRNFLEIETPILQSEAGGAEARPFITHHNTLDIPLYLRIATELHLKRMVVGGFEKVYELGRIFRNEGISTKHNPEFTSVEIYQAFSNYVDMMNLTEELIKDIVFNVCGSLVINYQNKEIDFSKPWSRISMKDIVKKYTGIDFDSFSGDFQSAKQAVKSINVEFSNKVNSMGRLLNEVFEQKVESELIEPTFVIDYPVEISPLARPHLDNKEMVQRFELFIVGRELANAFSELIDPVDQRERMQLQQSLRDEGDHEAHCIDEDFLNALEIGMPPTGGLGIGIDRLIMLITNSPSIRDVIPFPLLKPEITSNKNEKLPLNEVK</sequence>
<protein>
    <recommendedName>
        <fullName evidence="1">Lysine--tRNA ligase</fullName>
        <ecNumber evidence="1">6.1.1.6</ecNumber>
    </recommendedName>
    <alternativeName>
        <fullName evidence="1">Lysyl-tRNA synthetase</fullName>
        <shortName evidence="1">LysRS</shortName>
    </alternativeName>
</protein>
<name>SYK_PROM9</name>
<reference key="1">
    <citation type="journal article" date="2006" name="Science">
        <title>Genomic islands and the ecology and evolution of Prochlorococcus.</title>
        <authorList>
            <person name="Coleman M.L."/>
            <person name="Sullivan M.B."/>
            <person name="Martiny A.C."/>
            <person name="Steglich C."/>
            <person name="Barry K."/>
            <person name="Delong E.F."/>
            <person name="Chisholm S.W."/>
        </authorList>
    </citation>
    <scope>NUCLEOTIDE SEQUENCE [LARGE SCALE GENOMIC DNA]</scope>
    <source>
        <strain>MIT 9312</strain>
    </source>
</reference>
<accession>Q318C3</accession>
<gene>
    <name evidence="1" type="primary">lysS</name>
    <name type="ordered locus">PMT9312_1711</name>
</gene>
<feature type="chain" id="PRO_1000012905" description="Lysine--tRNA ligase">
    <location>
        <begin position="1"/>
        <end position="512"/>
    </location>
</feature>
<feature type="binding site" evidence="1">
    <location>
        <position position="408"/>
    </location>
    <ligand>
        <name>Mg(2+)</name>
        <dbReference type="ChEBI" id="CHEBI:18420"/>
        <label>1</label>
    </ligand>
</feature>
<feature type="binding site" evidence="1">
    <location>
        <position position="415"/>
    </location>
    <ligand>
        <name>Mg(2+)</name>
        <dbReference type="ChEBI" id="CHEBI:18420"/>
        <label>1</label>
    </ligand>
</feature>
<feature type="binding site" evidence="1">
    <location>
        <position position="415"/>
    </location>
    <ligand>
        <name>Mg(2+)</name>
        <dbReference type="ChEBI" id="CHEBI:18420"/>
        <label>2</label>
    </ligand>
</feature>